<accession>P47442</accession>
<accession>Q49288</accession>
<name>DNAJM_MYCGE</name>
<reference key="1">
    <citation type="journal article" date="1995" name="Science">
        <title>The minimal gene complement of Mycoplasma genitalium.</title>
        <authorList>
            <person name="Fraser C.M."/>
            <person name="Gocayne J.D."/>
            <person name="White O."/>
            <person name="Adams M.D."/>
            <person name="Clayton R.A."/>
            <person name="Fleischmann R.D."/>
            <person name="Bult C.J."/>
            <person name="Kerlavage A.R."/>
            <person name="Sutton G.G."/>
            <person name="Kelley J.M."/>
            <person name="Fritchman J.L."/>
            <person name="Weidman J.F."/>
            <person name="Small K.V."/>
            <person name="Sandusky M."/>
            <person name="Fuhrmann J.L."/>
            <person name="Nguyen D.T."/>
            <person name="Utterback T.R."/>
            <person name="Saudek D.M."/>
            <person name="Phillips C.A."/>
            <person name="Merrick J.M."/>
            <person name="Tomb J.-F."/>
            <person name="Dougherty B.A."/>
            <person name="Bott K.F."/>
            <person name="Hu P.-C."/>
            <person name="Lucier T.S."/>
            <person name="Peterson S.N."/>
            <person name="Smith H.O."/>
            <person name="Hutchison C.A. III"/>
            <person name="Venter J.C."/>
        </authorList>
    </citation>
    <scope>NUCLEOTIDE SEQUENCE [LARGE SCALE GENOMIC DNA]</scope>
    <source>
        <strain>ATCC 33530 / DSM 19775 / NCTC 10195 / G37</strain>
    </source>
</reference>
<reference key="2">
    <citation type="journal article" date="1993" name="J. Bacteriol.">
        <title>A survey of the Mycoplasma genitalium genome by using random sequencing.</title>
        <authorList>
            <person name="Peterson S.N."/>
            <person name="Hu P.-C."/>
            <person name="Bott K.F."/>
            <person name="Hutchison C.A. III"/>
        </authorList>
    </citation>
    <scope>NUCLEOTIDE SEQUENCE [GENOMIC DNA] OF 281-409</scope>
    <source>
        <strain>ATCC 33530 / DSM 19775 / NCTC 10195 / G37</strain>
    </source>
</reference>
<dbReference type="EMBL" id="L43967">
    <property type="protein sequence ID" value="AAC71418.1"/>
    <property type="molecule type" value="Genomic_DNA"/>
</dbReference>
<dbReference type="EMBL" id="U02163">
    <property type="protein sequence ID" value="AAD12445.1"/>
    <property type="molecule type" value="Genomic_DNA"/>
</dbReference>
<dbReference type="PIR" id="A64222">
    <property type="entry name" value="A64222"/>
</dbReference>
<dbReference type="RefSeq" id="WP_010869369.1">
    <property type="nucleotide sequence ID" value="NC_000908.2"/>
</dbReference>
<dbReference type="PDB" id="4DCZ">
    <property type="method" value="X-ray"/>
    <property type="resolution" value="2.90 A"/>
    <property type="chains" value="A/B=124-207"/>
</dbReference>
<dbReference type="PDBsum" id="4DCZ"/>
<dbReference type="SMR" id="P47442"/>
<dbReference type="STRING" id="243273.MG_200"/>
<dbReference type="GeneID" id="88282667"/>
<dbReference type="KEGG" id="mge:MG_200"/>
<dbReference type="eggNOG" id="COG0484">
    <property type="taxonomic scope" value="Bacteria"/>
</dbReference>
<dbReference type="HOGENOM" id="CLU_454017_0_0_14"/>
<dbReference type="InParanoid" id="P47442"/>
<dbReference type="OrthoDB" id="9779889at2"/>
<dbReference type="EvolutionaryTrace" id="P47442"/>
<dbReference type="Proteomes" id="UP000000807">
    <property type="component" value="Chromosome"/>
</dbReference>
<dbReference type="GO" id="GO:0005737">
    <property type="term" value="C:cytoplasm"/>
    <property type="evidence" value="ECO:0000318"/>
    <property type="project" value="GO_Central"/>
</dbReference>
<dbReference type="GO" id="GO:0051082">
    <property type="term" value="F:unfolded protein binding"/>
    <property type="evidence" value="ECO:0000318"/>
    <property type="project" value="GO_Central"/>
</dbReference>
<dbReference type="GO" id="GO:0051085">
    <property type="term" value="P:chaperone cofactor-dependent protein refolding"/>
    <property type="evidence" value="ECO:0000318"/>
    <property type="project" value="GO_Central"/>
</dbReference>
<dbReference type="GO" id="GO:0042026">
    <property type="term" value="P:protein refolding"/>
    <property type="evidence" value="ECO:0000318"/>
    <property type="project" value="GO_Central"/>
</dbReference>
<dbReference type="CDD" id="cd06257">
    <property type="entry name" value="DnaJ"/>
    <property type="match status" value="1"/>
</dbReference>
<dbReference type="FunFam" id="1.10.287.110:FF:000289">
    <property type="entry name" value="DnaJ homolog subfamily C member 7 homolog"/>
    <property type="match status" value="1"/>
</dbReference>
<dbReference type="Gene3D" id="3.30.70.3600">
    <property type="match status" value="1"/>
</dbReference>
<dbReference type="Gene3D" id="1.10.287.110">
    <property type="entry name" value="DnaJ domain"/>
    <property type="match status" value="1"/>
</dbReference>
<dbReference type="InterPro" id="IPR002939">
    <property type="entry name" value="DnaJ_C"/>
</dbReference>
<dbReference type="InterPro" id="IPR001623">
    <property type="entry name" value="DnaJ_domain"/>
</dbReference>
<dbReference type="InterPro" id="IPR018253">
    <property type="entry name" value="DnaJ_domain_CS"/>
</dbReference>
<dbReference type="InterPro" id="IPR022466">
    <property type="entry name" value="EAGR_box"/>
</dbReference>
<dbReference type="InterPro" id="IPR038145">
    <property type="entry name" value="EAGR_sf"/>
</dbReference>
<dbReference type="InterPro" id="IPR036869">
    <property type="entry name" value="J_dom_sf"/>
</dbReference>
<dbReference type="NCBIfam" id="TIGR03834">
    <property type="entry name" value="EAGR_box"/>
    <property type="match status" value="1"/>
</dbReference>
<dbReference type="PANTHER" id="PTHR43096:SF48">
    <property type="entry name" value="CHAPERONE PROTEIN DNAJ"/>
    <property type="match status" value="1"/>
</dbReference>
<dbReference type="PANTHER" id="PTHR43096">
    <property type="entry name" value="DNAJ HOMOLOG 1, MITOCHONDRIAL-RELATED"/>
    <property type="match status" value="1"/>
</dbReference>
<dbReference type="Pfam" id="PF00226">
    <property type="entry name" value="DnaJ"/>
    <property type="match status" value="1"/>
</dbReference>
<dbReference type="Pfam" id="PF01556">
    <property type="entry name" value="DnaJ_C"/>
    <property type="match status" value="1"/>
</dbReference>
<dbReference type="Pfam" id="PF16713">
    <property type="entry name" value="EAGR_box"/>
    <property type="match status" value="1"/>
</dbReference>
<dbReference type="PRINTS" id="PR00625">
    <property type="entry name" value="JDOMAIN"/>
</dbReference>
<dbReference type="SMART" id="SM00271">
    <property type="entry name" value="DnaJ"/>
    <property type="match status" value="1"/>
</dbReference>
<dbReference type="SUPFAM" id="SSF46565">
    <property type="entry name" value="Chaperone J-domain"/>
    <property type="match status" value="1"/>
</dbReference>
<dbReference type="PROSITE" id="PS00636">
    <property type="entry name" value="DNAJ_1"/>
    <property type="match status" value="1"/>
</dbReference>
<dbReference type="PROSITE" id="PS50076">
    <property type="entry name" value="DNAJ_2"/>
    <property type="match status" value="1"/>
</dbReference>
<sequence length="601" mass="68537">MAEQKRDYYEVLGITPDADQSEIKKAFRKLAKKYHPDRNNAPDAAKIFAEINEANDVLSNPKKRANYDKYGFDGVDGEPAFNFQADVFQSFFEEIAKSGVFNNQTNPEQKEKKKRYHWFSKKPKQEQPEINLDHVVEQTIKKVQQNQNQNKDPDELRSKVPGEVTASDWEALVGDTRYGYFDETGDWSWKGYFDEQGKWVWNEPVDSETSEVSVEPEPTPVAPEASFEEAQPEINAEPEASFESTPTPEPVAPEASFEEAQPEPTPIPEPIPTPVQVQPLLLDLNLFTIPTKATKDDLLFDNINLTTYEQVVDYLNSQATPNLAKTDGELQTIDGTNPLLLEQCKKIKKQAEQLFKKLFLKKQLPFITQPEVVEESKTSFDENNVNLVYFEKVPEILFINQQPKEVKYTRQVFDGLTNKTTSETITLEIQLLQTPKETVSAIFKGFGNDHGKGCGDLKIVFEKIKSPFFQVNEDGLHSACIIDPLVAYNGGIIDVFGPYTNFQVKVDGEIDINAIMKFEKLGIAKTKRKGDLFVHLYYSSVPKKKLTTNPQVQQFLELLQAEYELLQDNIKSLKYFKNNLVIPKKPLDQQSYQYLSQEPIS</sequence>
<feature type="chain" id="PRO_0000071002" description="DnaJ-like protein MG200">
    <location>
        <begin position="1"/>
        <end position="601"/>
    </location>
</feature>
<feature type="domain" description="J" evidence="1">
    <location>
        <begin position="5"/>
        <end position="77"/>
    </location>
</feature>
<feature type="region of interest" description="Disordered" evidence="2">
    <location>
        <begin position="143"/>
        <end position="163"/>
    </location>
</feature>
<feature type="region of interest" description="Disordered" evidence="2">
    <location>
        <begin position="205"/>
        <end position="272"/>
    </location>
</feature>
<feature type="compositionally biased region" description="Basic and acidic residues" evidence="2">
    <location>
        <begin position="151"/>
        <end position="160"/>
    </location>
</feature>
<feature type="compositionally biased region" description="Pro residues" evidence="2">
    <location>
        <begin position="263"/>
        <end position="272"/>
    </location>
</feature>
<feature type="turn" evidence="3">
    <location>
        <begin position="153"/>
        <end position="155"/>
    </location>
</feature>
<feature type="strand" evidence="3">
    <location>
        <begin position="163"/>
        <end position="165"/>
    </location>
</feature>
<feature type="helix" evidence="3">
    <location>
        <begin position="166"/>
        <end position="170"/>
    </location>
</feature>
<feature type="turn" evidence="3">
    <location>
        <begin position="171"/>
        <end position="174"/>
    </location>
</feature>
<feature type="turn" evidence="3">
    <location>
        <begin position="176"/>
        <end position="178"/>
    </location>
</feature>
<feature type="strand" evidence="3">
    <location>
        <begin position="179"/>
        <end position="181"/>
    </location>
</feature>
<feature type="strand" evidence="3">
    <location>
        <begin position="187"/>
        <end position="193"/>
    </location>
</feature>
<feature type="strand" evidence="3">
    <location>
        <begin position="197"/>
        <end position="201"/>
    </location>
</feature>
<protein>
    <recommendedName>
        <fullName>DnaJ-like protein MG200</fullName>
    </recommendedName>
</protein>
<keyword id="KW-0002">3D-structure</keyword>
<keyword id="KW-0143">Chaperone</keyword>
<keyword id="KW-1185">Reference proteome</keyword>
<evidence type="ECO:0000255" key="1">
    <source>
        <dbReference type="PROSITE-ProRule" id="PRU00286"/>
    </source>
</evidence>
<evidence type="ECO:0000256" key="2">
    <source>
        <dbReference type="SAM" id="MobiDB-lite"/>
    </source>
</evidence>
<evidence type="ECO:0007829" key="3">
    <source>
        <dbReference type="PDB" id="4DCZ"/>
    </source>
</evidence>
<organism>
    <name type="scientific">Mycoplasma genitalium (strain ATCC 33530 / DSM 19775 / NCTC 10195 / G37)</name>
    <name type="common">Mycoplasmoides genitalium</name>
    <dbReference type="NCBI Taxonomy" id="243273"/>
    <lineage>
        <taxon>Bacteria</taxon>
        <taxon>Bacillati</taxon>
        <taxon>Mycoplasmatota</taxon>
        <taxon>Mycoplasmoidales</taxon>
        <taxon>Mycoplasmoidaceae</taxon>
        <taxon>Mycoplasmoides</taxon>
    </lineage>
</organism>
<proteinExistence type="evidence at protein level"/>
<gene>
    <name type="ordered locus">MG200</name>
</gene>